<gene>
    <name type="primary">ndhG</name>
</gene>
<proteinExistence type="inferred from homology"/>
<geneLocation type="chloroplast"/>
<reference key="1">
    <citation type="submission" date="2007-03" db="EMBL/GenBank/DDBJ databases">
        <title>Sequencing analysis of Aethionema grandiflorum chloroplast DNA.</title>
        <authorList>
            <person name="Hosouchi T."/>
            <person name="Tsuruoka H."/>
            <person name="Kotani H."/>
        </authorList>
    </citation>
    <scope>NUCLEOTIDE SEQUENCE [LARGE SCALE GENOMIC DNA]</scope>
</reference>
<feature type="chain" id="PRO_0000360224" description="NAD(P)H-quinone oxidoreductase subunit 6, chloroplastic">
    <location>
        <begin position="1"/>
        <end position="176"/>
    </location>
</feature>
<feature type="transmembrane region" description="Helical" evidence="2">
    <location>
        <begin position="10"/>
        <end position="30"/>
    </location>
</feature>
<feature type="transmembrane region" description="Helical" evidence="2">
    <location>
        <begin position="32"/>
        <end position="52"/>
    </location>
</feature>
<feature type="transmembrane region" description="Helical" evidence="2">
    <location>
        <begin position="61"/>
        <end position="81"/>
    </location>
</feature>
<feature type="transmembrane region" description="Helical" evidence="2">
    <location>
        <begin position="95"/>
        <end position="115"/>
    </location>
</feature>
<feature type="transmembrane region" description="Helical" evidence="2">
    <location>
        <begin position="152"/>
        <end position="172"/>
    </location>
</feature>
<protein>
    <recommendedName>
        <fullName>NAD(P)H-quinone oxidoreductase subunit 6, chloroplastic</fullName>
        <ecNumber>7.1.1.-</ecNumber>
    </recommendedName>
    <alternativeName>
        <fullName>NAD(P)H dehydrogenase subunit 6</fullName>
    </alternativeName>
    <alternativeName>
        <fullName>NADH-plastoquinone oxidoreductase subunit 6</fullName>
    </alternativeName>
</protein>
<dbReference type="EC" id="7.1.1.-"/>
<dbReference type="EMBL" id="AP009367">
    <property type="protein sequence ID" value="BAF49908.1"/>
    <property type="molecule type" value="Genomic_DNA"/>
</dbReference>
<dbReference type="RefSeq" id="YP_001123083.1">
    <property type="nucleotide sequence ID" value="NC_009266.1"/>
</dbReference>
<dbReference type="SMR" id="A4QJQ3"/>
<dbReference type="GeneID" id="4962319"/>
<dbReference type="GO" id="GO:0009535">
    <property type="term" value="C:chloroplast thylakoid membrane"/>
    <property type="evidence" value="ECO:0007669"/>
    <property type="project" value="UniProtKB-SubCell"/>
</dbReference>
<dbReference type="GO" id="GO:0008137">
    <property type="term" value="F:NADH dehydrogenase (ubiquinone) activity"/>
    <property type="evidence" value="ECO:0007669"/>
    <property type="project" value="InterPro"/>
</dbReference>
<dbReference type="GO" id="GO:0048038">
    <property type="term" value="F:quinone binding"/>
    <property type="evidence" value="ECO:0007669"/>
    <property type="project" value="UniProtKB-KW"/>
</dbReference>
<dbReference type="FunFam" id="1.20.120.1200:FF:000002">
    <property type="entry name" value="NAD(P)H-quinone oxidoreductase subunit 6, chloroplastic"/>
    <property type="match status" value="1"/>
</dbReference>
<dbReference type="Gene3D" id="1.20.120.1200">
    <property type="entry name" value="NADH-ubiquinone/plastoquinone oxidoreductase chain 6, subunit NuoJ"/>
    <property type="match status" value="1"/>
</dbReference>
<dbReference type="InterPro" id="IPR050290">
    <property type="entry name" value="NAD(P)H-Q_Oxidoreduct_6"/>
</dbReference>
<dbReference type="InterPro" id="IPR001457">
    <property type="entry name" value="NADH_UbQ/plastoQ_OxRdtase_su6"/>
</dbReference>
<dbReference type="InterPro" id="IPR042106">
    <property type="entry name" value="Nuo/plastoQ_OxRdtase_6_NuoJ"/>
</dbReference>
<dbReference type="PANTHER" id="PTHR48479">
    <property type="entry name" value="NAD(P)H-QUINONE OXIDOREDUCTASE SUBUNIT 6, CHLOROPLASTIC"/>
    <property type="match status" value="1"/>
</dbReference>
<dbReference type="PANTHER" id="PTHR48479:SF1">
    <property type="entry name" value="NAD(P)H-QUINONE OXIDOREDUCTASE SUBUNIT 6, CHLOROPLASTIC"/>
    <property type="match status" value="1"/>
</dbReference>
<dbReference type="Pfam" id="PF00499">
    <property type="entry name" value="Oxidored_q3"/>
    <property type="match status" value="1"/>
</dbReference>
<evidence type="ECO:0000250" key="1"/>
<evidence type="ECO:0000255" key="2"/>
<evidence type="ECO:0000305" key="3"/>
<accession>A4QJQ3</accession>
<keyword id="KW-0150">Chloroplast</keyword>
<keyword id="KW-0472">Membrane</keyword>
<keyword id="KW-0520">NAD</keyword>
<keyword id="KW-0521">NADP</keyword>
<keyword id="KW-0934">Plastid</keyword>
<keyword id="KW-0618">Plastoquinone</keyword>
<keyword id="KW-0874">Quinone</keyword>
<keyword id="KW-0793">Thylakoid</keyword>
<keyword id="KW-1278">Translocase</keyword>
<keyword id="KW-0812">Transmembrane</keyword>
<keyword id="KW-1133">Transmembrane helix</keyword>
<keyword id="KW-0813">Transport</keyword>
<comment type="function">
    <text evidence="1">NDH shuttles electrons from NAD(P)H:plastoquinone, via FMN and iron-sulfur (Fe-S) centers, to quinones in the photosynthetic chain and possibly in a chloroplast respiratory chain. The immediate electron acceptor for the enzyme in this species is believed to be plastoquinone. Couples the redox reaction to proton translocation, and thus conserves the redox energy in a proton gradient (By similarity).</text>
</comment>
<comment type="catalytic activity">
    <reaction>
        <text>a plastoquinone + NADH + (n+1) H(+)(in) = a plastoquinol + NAD(+) + n H(+)(out)</text>
        <dbReference type="Rhea" id="RHEA:42608"/>
        <dbReference type="Rhea" id="RHEA-COMP:9561"/>
        <dbReference type="Rhea" id="RHEA-COMP:9562"/>
        <dbReference type="ChEBI" id="CHEBI:15378"/>
        <dbReference type="ChEBI" id="CHEBI:17757"/>
        <dbReference type="ChEBI" id="CHEBI:57540"/>
        <dbReference type="ChEBI" id="CHEBI:57945"/>
        <dbReference type="ChEBI" id="CHEBI:62192"/>
    </reaction>
</comment>
<comment type="catalytic activity">
    <reaction>
        <text>a plastoquinone + NADPH + (n+1) H(+)(in) = a plastoquinol + NADP(+) + n H(+)(out)</text>
        <dbReference type="Rhea" id="RHEA:42612"/>
        <dbReference type="Rhea" id="RHEA-COMP:9561"/>
        <dbReference type="Rhea" id="RHEA-COMP:9562"/>
        <dbReference type="ChEBI" id="CHEBI:15378"/>
        <dbReference type="ChEBI" id="CHEBI:17757"/>
        <dbReference type="ChEBI" id="CHEBI:57783"/>
        <dbReference type="ChEBI" id="CHEBI:58349"/>
        <dbReference type="ChEBI" id="CHEBI:62192"/>
    </reaction>
</comment>
<comment type="subunit">
    <text evidence="1">NDH is composed of at least 16 different subunits, 5 of which are encoded in the nucleus.</text>
</comment>
<comment type="subcellular location">
    <subcellularLocation>
        <location evidence="1">Plastid</location>
        <location evidence="1">Chloroplast thylakoid membrane</location>
        <topology evidence="1">Multi-pass membrane protein</topology>
    </subcellularLocation>
</comment>
<comment type="similarity">
    <text evidence="3">Belongs to the complex I subunit 6 family.</text>
</comment>
<sequence length="176" mass="19311">MDLPGPIHDFLLVFLGSGLLFGSIGVVLFTNPIFSAFSLGFVLVCISLLYILSNSHFVAAAQLLIYVGAITVLIIFAVMFMNDSEYSTDLNRWTVGDGITSLICTTILFSLISTILDTSWYGVIWTTRLNQILEQDLISNSQQIGIHLSTDFFLPFELISIILLVALIGAISVARQ</sequence>
<name>NU6C_AETGR</name>
<organism>
    <name type="scientific">Aethionema grandiflorum</name>
    <name type="common">Persian stone-cress</name>
    <dbReference type="NCBI Taxonomy" id="72657"/>
    <lineage>
        <taxon>Eukaryota</taxon>
        <taxon>Viridiplantae</taxon>
        <taxon>Streptophyta</taxon>
        <taxon>Embryophyta</taxon>
        <taxon>Tracheophyta</taxon>
        <taxon>Spermatophyta</taxon>
        <taxon>Magnoliopsida</taxon>
        <taxon>eudicotyledons</taxon>
        <taxon>Gunneridae</taxon>
        <taxon>Pentapetalae</taxon>
        <taxon>rosids</taxon>
        <taxon>malvids</taxon>
        <taxon>Brassicales</taxon>
        <taxon>Brassicaceae</taxon>
        <taxon>Aethionemeae</taxon>
        <taxon>Aethionema</taxon>
    </lineage>
</organism>